<accession>Q2FS43</accession>
<dbReference type="EC" id="2.3.1.234" evidence="1"/>
<dbReference type="EC" id="2.7.11.1" evidence="1"/>
<dbReference type="EMBL" id="CP000254">
    <property type="protein sequence ID" value="ABD42560.1"/>
    <property type="molecule type" value="Genomic_DNA"/>
</dbReference>
<dbReference type="RefSeq" id="WP_011449813.1">
    <property type="nucleotide sequence ID" value="NC_007796.1"/>
</dbReference>
<dbReference type="SMR" id="Q2FS43"/>
<dbReference type="FunCoup" id="Q2FS43">
    <property type="interactions" value="138"/>
</dbReference>
<dbReference type="STRING" id="323259.Mhun_2868"/>
<dbReference type="EnsemblBacteria" id="ABD42560">
    <property type="protein sequence ID" value="ABD42560"/>
    <property type="gene ID" value="Mhun_2868"/>
</dbReference>
<dbReference type="GeneID" id="3923825"/>
<dbReference type="KEGG" id="mhu:Mhun_2868"/>
<dbReference type="eggNOG" id="arCOG01183">
    <property type="taxonomic scope" value="Archaea"/>
</dbReference>
<dbReference type="eggNOG" id="arCOG01185">
    <property type="taxonomic scope" value="Archaea"/>
</dbReference>
<dbReference type="HOGENOM" id="CLU_023208_2_2_2"/>
<dbReference type="InParanoid" id="Q2FS43"/>
<dbReference type="OrthoDB" id="6818at2157"/>
<dbReference type="Proteomes" id="UP000001941">
    <property type="component" value="Chromosome"/>
</dbReference>
<dbReference type="GO" id="GO:0005737">
    <property type="term" value="C:cytoplasm"/>
    <property type="evidence" value="ECO:0007669"/>
    <property type="project" value="UniProtKB-SubCell"/>
</dbReference>
<dbReference type="GO" id="GO:0000408">
    <property type="term" value="C:EKC/KEOPS complex"/>
    <property type="evidence" value="ECO:0007669"/>
    <property type="project" value="InterPro"/>
</dbReference>
<dbReference type="GO" id="GO:0005524">
    <property type="term" value="F:ATP binding"/>
    <property type="evidence" value="ECO:0007669"/>
    <property type="project" value="UniProtKB-UniRule"/>
</dbReference>
<dbReference type="GO" id="GO:0005506">
    <property type="term" value="F:iron ion binding"/>
    <property type="evidence" value="ECO:0007669"/>
    <property type="project" value="UniProtKB-UniRule"/>
</dbReference>
<dbReference type="GO" id="GO:0004222">
    <property type="term" value="F:metalloendopeptidase activity"/>
    <property type="evidence" value="ECO:0007669"/>
    <property type="project" value="InterPro"/>
</dbReference>
<dbReference type="GO" id="GO:0061711">
    <property type="term" value="F:N(6)-L-threonylcarbamoyladenine synthase activity"/>
    <property type="evidence" value="ECO:0007669"/>
    <property type="project" value="UniProtKB-EC"/>
</dbReference>
<dbReference type="GO" id="GO:0106310">
    <property type="term" value="F:protein serine kinase activity"/>
    <property type="evidence" value="ECO:0007669"/>
    <property type="project" value="RHEA"/>
</dbReference>
<dbReference type="GO" id="GO:0004674">
    <property type="term" value="F:protein serine/threonine kinase activity"/>
    <property type="evidence" value="ECO:0007669"/>
    <property type="project" value="UniProtKB-KW"/>
</dbReference>
<dbReference type="GO" id="GO:0004712">
    <property type="term" value="F:protein serine/threonine/tyrosine kinase activity"/>
    <property type="evidence" value="ECO:0007669"/>
    <property type="project" value="UniProtKB-UniRule"/>
</dbReference>
<dbReference type="GO" id="GO:0008270">
    <property type="term" value="F:zinc ion binding"/>
    <property type="evidence" value="ECO:0007669"/>
    <property type="project" value="InterPro"/>
</dbReference>
<dbReference type="GO" id="GO:0002949">
    <property type="term" value="P:tRNA threonylcarbamoyladenosine modification"/>
    <property type="evidence" value="ECO:0007669"/>
    <property type="project" value="UniProtKB-UniRule"/>
</dbReference>
<dbReference type="FunFam" id="3.30.420.40:FF:000038">
    <property type="entry name" value="Probable tRNA N6-adenosine threonylcarbamoyltransferase"/>
    <property type="match status" value="1"/>
</dbReference>
<dbReference type="Gene3D" id="3.30.420.40">
    <property type="match status" value="2"/>
</dbReference>
<dbReference type="Gene3D" id="3.30.200.20">
    <property type="entry name" value="Phosphorylase Kinase, domain 1"/>
    <property type="match status" value="1"/>
</dbReference>
<dbReference type="Gene3D" id="1.10.510.10">
    <property type="entry name" value="Transferase(Phosphotransferase) domain 1"/>
    <property type="match status" value="1"/>
</dbReference>
<dbReference type="HAMAP" id="MF_01446">
    <property type="entry name" value="Kae1"/>
    <property type="match status" value="1"/>
</dbReference>
<dbReference type="HAMAP" id="MF_01447">
    <property type="entry name" value="Kae1_Bud32_arch"/>
    <property type="match status" value="1"/>
</dbReference>
<dbReference type="InterPro" id="IPR043129">
    <property type="entry name" value="ATPase_NBD"/>
</dbReference>
<dbReference type="InterPro" id="IPR022495">
    <property type="entry name" value="Bud32"/>
</dbReference>
<dbReference type="InterPro" id="IPR000905">
    <property type="entry name" value="Gcp-like_dom"/>
</dbReference>
<dbReference type="InterPro" id="IPR017861">
    <property type="entry name" value="KAE1/TsaD"/>
</dbReference>
<dbReference type="InterPro" id="IPR034680">
    <property type="entry name" value="Kae1_archaea_euk"/>
</dbReference>
<dbReference type="InterPro" id="IPR011009">
    <property type="entry name" value="Kinase-like_dom_sf"/>
</dbReference>
<dbReference type="InterPro" id="IPR017860">
    <property type="entry name" value="Peptidase_M22_CS"/>
</dbReference>
<dbReference type="InterPro" id="IPR000719">
    <property type="entry name" value="Prot_kinase_dom"/>
</dbReference>
<dbReference type="InterPro" id="IPR018934">
    <property type="entry name" value="RIO_dom"/>
</dbReference>
<dbReference type="InterPro" id="IPR009220">
    <property type="entry name" value="tRNA_threonyl_synthase/kinase"/>
</dbReference>
<dbReference type="InterPro" id="IPR008266">
    <property type="entry name" value="Tyr_kinase_AS"/>
</dbReference>
<dbReference type="NCBIfam" id="TIGR03724">
    <property type="entry name" value="arch_bud32"/>
    <property type="match status" value="1"/>
</dbReference>
<dbReference type="NCBIfam" id="TIGR03722">
    <property type="entry name" value="arch_KAE1"/>
    <property type="match status" value="1"/>
</dbReference>
<dbReference type="NCBIfam" id="TIGR00329">
    <property type="entry name" value="gcp_kae1"/>
    <property type="match status" value="1"/>
</dbReference>
<dbReference type="NCBIfam" id="NF007174">
    <property type="entry name" value="PRK09605.1"/>
    <property type="match status" value="1"/>
</dbReference>
<dbReference type="NCBIfam" id="NF011462">
    <property type="entry name" value="PRK14879.1-3"/>
    <property type="match status" value="1"/>
</dbReference>
<dbReference type="PANTHER" id="PTHR11735">
    <property type="entry name" value="TRNA N6-ADENOSINE THREONYLCARBAMOYLTRANSFERASE"/>
    <property type="match status" value="1"/>
</dbReference>
<dbReference type="PANTHER" id="PTHR11735:SF14">
    <property type="entry name" value="TRNA N6-ADENOSINE THREONYLCARBAMOYLTRANSFERASE"/>
    <property type="match status" value="1"/>
</dbReference>
<dbReference type="Pfam" id="PF01163">
    <property type="entry name" value="RIO1"/>
    <property type="match status" value="1"/>
</dbReference>
<dbReference type="Pfam" id="PF00814">
    <property type="entry name" value="TsaD"/>
    <property type="match status" value="1"/>
</dbReference>
<dbReference type="PIRSF" id="PIRSF036401">
    <property type="entry name" value="Gcp_STYKS"/>
    <property type="match status" value="1"/>
</dbReference>
<dbReference type="PRINTS" id="PR00789">
    <property type="entry name" value="OSIALOPTASE"/>
</dbReference>
<dbReference type="SUPFAM" id="SSF53067">
    <property type="entry name" value="Actin-like ATPase domain"/>
    <property type="match status" value="1"/>
</dbReference>
<dbReference type="SUPFAM" id="SSF56112">
    <property type="entry name" value="Protein kinase-like (PK-like)"/>
    <property type="match status" value="1"/>
</dbReference>
<dbReference type="PROSITE" id="PS01016">
    <property type="entry name" value="GLYCOPROTEASE"/>
    <property type="match status" value="1"/>
</dbReference>
<dbReference type="PROSITE" id="PS50011">
    <property type="entry name" value="PROTEIN_KINASE_DOM"/>
    <property type="match status" value="1"/>
</dbReference>
<dbReference type="PROSITE" id="PS00109">
    <property type="entry name" value="PROTEIN_KINASE_TYR"/>
    <property type="match status" value="1"/>
</dbReference>
<reference key="1">
    <citation type="journal article" date="2016" name="Stand. Genomic Sci.">
        <title>Complete genome sequence of Methanospirillum hungatei type strain JF1.</title>
        <authorList>
            <person name="Gunsalus R.P."/>
            <person name="Cook L.E."/>
            <person name="Crable B."/>
            <person name="Rohlin L."/>
            <person name="McDonald E."/>
            <person name="Mouttaki H."/>
            <person name="Sieber J.R."/>
            <person name="Poweleit N."/>
            <person name="Zhou H."/>
            <person name="Lapidus A.L."/>
            <person name="Daligault H.E."/>
            <person name="Land M."/>
            <person name="Gilna P."/>
            <person name="Ivanova N."/>
            <person name="Kyrpides N."/>
            <person name="Culley D.E."/>
            <person name="McInerney M.J."/>
        </authorList>
    </citation>
    <scope>NUCLEOTIDE SEQUENCE [LARGE SCALE GENOMIC DNA]</scope>
    <source>
        <strain>ATCC 27890 / DSM 864 / NBRC 100397 / JF-1</strain>
    </source>
</reference>
<name>KAE1B_METHJ</name>
<keyword id="KW-0012">Acyltransferase</keyword>
<keyword id="KW-0067">ATP-binding</keyword>
<keyword id="KW-0963">Cytoplasm</keyword>
<keyword id="KW-0408">Iron</keyword>
<keyword id="KW-0418">Kinase</keyword>
<keyword id="KW-0479">Metal-binding</keyword>
<keyword id="KW-0511">Multifunctional enzyme</keyword>
<keyword id="KW-0547">Nucleotide-binding</keyword>
<keyword id="KW-1185">Reference proteome</keyword>
<keyword id="KW-0723">Serine/threonine-protein kinase</keyword>
<keyword id="KW-0808">Transferase</keyword>
<keyword id="KW-0819">tRNA processing</keyword>
<gene>
    <name type="ordered locus">Mhun_2868</name>
</gene>
<organism>
    <name type="scientific">Methanospirillum hungatei JF-1 (strain ATCC 27890 / DSM 864 / NBRC 100397 / JF-1)</name>
    <dbReference type="NCBI Taxonomy" id="323259"/>
    <lineage>
        <taxon>Archaea</taxon>
        <taxon>Methanobacteriati</taxon>
        <taxon>Methanobacteriota</taxon>
        <taxon>Stenosarchaea group</taxon>
        <taxon>Methanomicrobia</taxon>
        <taxon>Methanomicrobiales</taxon>
        <taxon>Methanospirillaceae</taxon>
        <taxon>Methanospirillum</taxon>
    </lineage>
</organism>
<feature type="chain" id="PRO_0000303658" description="Probable bifunctional tRNA threonylcarbamoyladenosine biosynthesis protein">
    <location>
        <begin position="1"/>
        <end position="520"/>
    </location>
</feature>
<feature type="domain" description="Protein kinase" evidence="1">
    <location>
        <begin position="327"/>
        <end position="520"/>
    </location>
</feature>
<feature type="region of interest" description="Kae1">
    <location>
        <begin position="1"/>
        <end position="318"/>
    </location>
</feature>
<feature type="active site" description="Proton acceptor; for kinase activity" evidence="1">
    <location>
        <position position="437"/>
    </location>
</feature>
<feature type="binding site" evidence="1">
    <location>
        <position position="105"/>
    </location>
    <ligand>
        <name>Fe cation</name>
        <dbReference type="ChEBI" id="CHEBI:24875"/>
    </ligand>
</feature>
<feature type="binding site" evidence="1">
    <location>
        <position position="109"/>
    </location>
    <ligand>
        <name>Fe cation</name>
        <dbReference type="ChEBI" id="CHEBI:24875"/>
    </ligand>
</feature>
<feature type="binding site" evidence="1">
    <location>
        <begin position="126"/>
        <end position="130"/>
    </location>
    <ligand>
        <name>L-threonylcarbamoyladenylate</name>
        <dbReference type="ChEBI" id="CHEBI:73682"/>
    </ligand>
</feature>
<feature type="binding site" evidence="1">
    <location>
        <position position="126"/>
    </location>
    <ligand>
        <name>Fe cation</name>
        <dbReference type="ChEBI" id="CHEBI:24875"/>
    </ligand>
</feature>
<feature type="binding site" evidence="1">
    <location>
        <position position="158"/>
    </location>
    <ligand>
        <name>L-threonylcarbamoyladenylate</name>
        <dbReference type="ChEBI" id="CHEBI:73682"/>
    </ligand>
</feature>
<feature type="binding site" evidence="1">
    <location>
        <position position="171"/>
    </location>
    <ligand>
        <name>L-threonylcarbamoyladenylate</name>
        <dbReference type="ChEBI" id="CHEBI:73682"/>
    </ligand>
</feature>
<feature type="binding site" evidence="1">
    <location>
        <position position="175"/>
    </location>
    <ligand>
        <name>L-threonylcarbamoyladenylate</name>
        <dbReference type="ChEBI" id="CHEBI:73682"/>
    </ligand>
</feature>
<feature type="binding site" evidence="1">
    <location>
        <position position="251"/>
    </location>
    <ligand>
        <name>L-threonylcarbamoyladenylate</name>
        <dbReference type="ChEBI" id="CHEBI:73682"/>
    </ligand>
</feature>
<feature type="binding site" evidence="1">
    <location>
        <position position="279"/>
    </location>
    <ligand>
        <name>Fe cation</name>
        <dbReference type="ChEBI" id="CHEBI:24875"/>
    </ligand>
</feature>
<feature type="binding site" evidence="1">
    <location>
        <begin position="333"/>
        <end position="341"/>
    </location>
    <ligand>
        <name>ATP</name>
        <dbReference type="ChEBI" id="CHEBI:30616"/>
    </ligand>
</feature>
<feature type="binding site" evidence="1">
    <location>
        <position position="350"/>
    </location>
    <ligand>
        <name>ATP</name>
        <dbReference type="ChEBI" id="CHEBI:30616"/>
    </ligand>
</feature>
<proteinExistence type="inferred from homology"/>
<comment type="function">
    <text evidence="1">Required for the formation of a threonylcarbamoyl group on adenosine at position 37 (t(6)A37) in tRNAs that read codons beginning with adenine. Is a component of the KEOPS complex that is probably involved in the transfer of the threonylcarbamoyl moiety of threonylcarbamoyl-AMP (TC-AMP) to the N6 group of A37. The Kae1 domain likely plays a direct catalytic role in this reaction. The Bud32 domain probably displays kinase activity that regulates Kae1 function.</text>
</comment>
<comment type="catalytic activity">
    <reaction evidence="1">
        <text>L-seryl-[protein] + ATP = O-phospho-L-seryl-[protein] + ADP + H(+)</text>
        <dbReference type="Rhea" id="RHEA:17989"/>
        <dbReference type="Rhea" id="RHEA-COMP:9863"/>
        <dbReference type="Rhea" id="RHEA-COMP:11604"/>
        <dbReference type="ChEBI" id="CHEBI:15378"/>
        <dbReference type="ChEBI" id="CHEBI:29999"/>
        <dbReference type="ChEBI" id="CHEBI:30616"/>
        <dbReference type="ChEBI" id="CHEBI:83421"/>
        <dbReference type="ChEBI" id="CHEBI:456216"/>
        <dbReference type="EC" id="2.7.11.1"/>
    </reaction>
</comment>
<comment type="catalytic activity">
    <reaction evidence="1">
        <text>L-threonyl-[protein] + ATP = O-phospho-L-threonyl-[protein] + ADP + H(+)</text>
        <dbReference type="Rhea" id="RHEA:46608"/>
        <dbReference type="Rhea" id="RHEA-COMP:11060"/>
        <dbReference type="Rhea" id="RHEA-COMP:11605"/>
        <dbReference type="ChEBI" id="CHEBI:15378"/>
        <dbReference type="ChEBI" id="CHEBI:30013"/>
        <dbReference type="ChEBI" id="CHEBI:30616"/>
        <dbReference type="ChEBI" id="CHEBI:61977"/>
        <dbReference type="ChEBI" id="CHEBI:456216"/>
        <dbReference type="EC" id="2.7.11.1"/>
    </reaction>
</comment>
<comment type="catalytic activity">
    <reaction evidence="1">
        <text>L-threonylcarbamoyladenylate + adenosine(37) in tRNA = N(6)-L-threonylcarbamoyladenosine(37) in tRNA + AMP + H(+)</text>
        <dbReference type="Rhea" id="RHEA:37059"/>
        <dbReference type="Rhea" id="RHEA-COMP:10162"/>
        <dbReference type="Rhea" id="RHEA-COMP:10163"/>
        <dbReference type="ChEBI" id="CHEBI:15378"/>
        <dbReference type="ChEBI" id="CHEBI:73682"/>
        <dbReference type="ChEBI" id="CHEBI:74411"/>
        <dbReference type="ChEBI" id="CHEBI:74418"/>
        <dbReference type="ChEBI" id="CHEBI:456215"/>
        <dbReference type="EC" id="2.3.1.234"/>
    </reaction>
</comment>
<comment type="cofactor">
    <cofactor evidence="1">
        <name>Fe(2+)</name>
        <dbReference type="ChEBI" id="CHEBI:29033"/>
    </cofactor>
    <text evidence="1">Binds 1 Fe(2+) ion per subunit.</text>
</comment>
<comment type="subunit">
    <text evidence="1">Component of the KEOPS complex that consists of Kae1, Bud32, Cgi121 and Pcc1; the whole complex dimerizes.</text>
</comment>
<comment type="subcellular location">
    <subcellularLocation>
        <location evidence="1">Cytoplasm</location>
    </subcellularLocation>
</comment>
<comment type="similarity">
    <text evidence="1">In the N-terminal section; belongs to the KAE1 / TsaD family.</text>
</comment>
<comment type="similarity">
    <text evidence="1">In the C-terminal section; belongs to the protein kinase superfamily. Tyr protein kinase family. BUD32 subfamily.</text>
</comment>
<protein>
    <recommendedName>
        <fullName evidence="1">Probable bifunctional tRNA threonylcarbamoyladenosine biosynthesis protein</fullName>
    </recommendedName>
    <domain>
        <recommendedName>
            <fullName evidence="1">tRNA N6-adenosine threonylcarbamoyltransferase</fullName>
            <ecNumber evidence="1">2.3.1.234</ecNumber>
        </recommendedName>
        <alternativeName>
            <fullName>N6-L-threonylcarbamoyladenine synthase</fullName>
            <shortName>t(6)A synthase</shortName>
        </alternativeName>
        <alternativeName>
            <fullName evidence="1">t(6)A37 threonylcarbamoyladenosine biosynthesis protein Kae1</fullName>
        </alternativeName>
        <alternativeName>
            <fullName evidence="1">tRNA threonylcarbamoyladenosine biosynthesis protein Kae1</fullName>
        </alternativeName>
    </domain>
    <domain>
        <recommendedName>
            <fullName evidence="1">Serine/threonine-protein kinase Bud32</fullName>
            <ecNumber evidence="1">2.7.11.1</ecNumber>
        </recommendedName>
    </domain>
</protein>
<sequence>MKIGPVLGIEGTAWNLSAALFDDDLIKLVSHPYKPVQGGIHPREAAQHHASVITSVIEEVLKGNPTPVAVAFSQGPGLGPCLRIVGTAARALALSFDVPLIGVNHCVAHVEIGRFASGFDDPVVLYASGANTQVLGYLQGRYRIFGETLDIGIGNAIDKFARSKGLPHPGGPEIERIAKNGSYIPLPYTVKGMDLAFSGLVSAAKDASAPLEDVCYSLQETAFAMCTEVTERALSQTGKEQLILVGGVGMNKRLQEMLSCMCEDRDAAFSVPNPQYLGDNGAMIAYTGRVMLESGSVLPVEESRVNPSYRADQVLVTWREEPSGSERHPDAYSARGAEAIVRFCDGAASKIRVSKRYRHPELDRRLIAERTRAEARLIAEARKAGVRTPIIREITQDTIIMEHIDGVKLKECLSPELLEETGRMVGKLHAAQIVHGDLTTCNFLVHDGKTWLIDFGLAGTSSDIEHRGVDIHVLFQVLESTSKDSDILKEAFIQGYREKMPLADEILNREHEIELRGRYL</sequence>
<evidence type="ECO:0000255" key="1">
    <source>
        <dbReference type="HAMAP-Rule" id="MF_01447"/>
    </source>
</evidence>